<organism>
    <name type="scientific">Clostridium kluyveri (strain ATCC 8527 / DSM 555 / NBRC 12016 / NCIMB 10680 / K1)</name>
    <dbReference type="NCBI Taxonomy" id="431943"/>
    <lineage>
        <taxon>Bacteria</taxon>
        <taxon>Bacillati</taxon>
        <taxon>Bacillota</taxon>
        <taxon>Clostridia</taxon>
        <taxon>Eubacteriales</taxon>
        <taxon>Clostridiaceae</taxon>
        <taxon>Clostridium</taxon>
    </lineage>
</organism>
<name>RS12_CLOK5</name>
<protein>
    <recommendedName>
        <fullName evidence="2">Small ribosomal subunit protein uS12</fullName>
    </recommendedName>
    <alternativeName>
        <fullName evidence="3">30S ribosomal protein S12</fullName>
    </alternativeName>
</protein>
<dbReference type="EMBL" id="CP000673">
    <property type="protein sequence ID" value="EDK32273.1"/>
    <property type="molecule type" value="Genomic_DNA"/>
</dbReference>
<dbReference type="RefSeq" id="WP_011988799.1">
    <property type="nucleotide sequence ID" value="NC_009706.1"/>
</dbReference>
<dbReference type="SMR" id="A5N4P2"/>
<dbReference type="STRING" id="431943.CKL_0219"/>
<dbReference type="KEGG" id="ckl:CKL_0219"/>
<dbReference type="eggNOG" id="COG0048">
    <property type="taxonomic scope" value="Bacteria"/>
</dbReference>
<dbReference type="HOGENOM" id="CLU_104295_1_2_9"/>
<dbReference type="Proteomes" id="UP000002411">
    <property type="component" value="Chromosome"/>
</dbReference>
<dbReference type="GO" id="GO:0015935">
    <property type="term" value="C:small ribosomal subunit"/>
    <property type="evidence" value="ECO:0007669"/>
    <property type="project" value="InterPro"/>
</dbReference>
<dbReference type="GO" id="GO:0019843">
    <property type="term" value="F:rRNA binding"/>
    <property type="evidence" value="ECO:0007669"/>
    <property type="project" value="UniProtKB-UniRule"/>
</dbReference>
<dbReference type="GO" id="GO:0003735">
    <property type="term" value="F:structural constituent of ribosome"/>
    <property type="evidence" value="ECO:0007669"/>
    <property type="project" value="InterPro"/>
</dbReference>
<dbReference type="GO" id="GO:0000049">
    <property type="term" value="F:tRNA binding"/>
    <property type="evidence" value="ECO:0007669"/>
    <property type="project" value="UniProtKB-UniRule"/>
</dbReference>
<dbReference type="GO" id="GO:0006412">
    <property type="term" value="P:translation"/>
    <property type="evidence" value="ECO:0007669"/>
    <property type="project" value="UniProtKB-UniRule"/>
</dbReference>
<dbReference type="CDD" id="cd03368">
    <property type="entry name" value="Ribosomal_S12"/>
    <property type="match status" value="1"/>
</dbReference>
<dbReference type="FunFam" id="2.40.50.140:FF:000001">
    <property type="entry name" value="30S ribosomal protein S12"/>
    <property type="match status" value="1"/>
</dbReference>
<dbReference type="Gene3D" id="2.40.50.140">
    <property type="entry name" value="Nucleic acid-binding proteins"/>
    <property type="match status" value="1"/>
</dbReference>
<dbReference type="HAMAP" id="MF_00403_B">
    <property type="entry name" value="Ribosomal_uS12_B"/>
    <property type="match status" value="1"/>
</dbReference>
<dbReference type="InterPro" id="IPR012340">
    <property type="entry name" value="NA-bd_OB-fold"/>
</dbReference>
<dbReference type="InterPro" id="IPR006032">
    <property type="entry name" value="Ribosomal_uS12"/>
</dbReference>
<dbReference type="InterPro" id="IPR005679">
    <property type="entry name" value="Ribosomal_uS12_bac"/>
</dbReference>
<dbReference type="NCBIfam" id="TIGR00981">
    <property type="entry name" value="rpsL_bact"/>
    <property type="match status" value="1"/>
</dbReference>
<dbReference type="PANTHER" id="PTHR11652">
    <property type="entry name" value="30S RIBOSOMAL PROTEIN S12 FAMILY MEMBER"/>
    <property type="match status" value="1"/>
</dbReference>
<dbReference type="Pfam" id="PF00164">
    <property type="entry name" value="Ribosom_S12_S23"/>
    <property type="match status" value="1"/>
</dbReference>
<dbReference type="PIRSF" id="PIRSF002133">
    <property type="entry name" value="Ribosomal_S12/S23"/>
    <property type="match status" value="1"/>
</dbReference>
<dbReference type="PRINTS" id="PR01034">
    <property type="entry name" value="RIBOSOMALS12"/>
</dbReference>
<dbReference type="SUPFAM" id="SSF50249">
    <property type="entry name" value="Nucleic acid-binding proteins"/>
    <property type="match status" value="1"/>
</dbReference>
<dbReference type="PROSITE" id="PS00055">
    <property type="entry name" value="RIBOSOMAL_S12"/>
    <property type="match status" value="1"/>
</dbReference>
<reference key="1">
    <citation type="journal article" date="2008" name="Proc. Natl. Acad. Sci. U.S.A.">
        <title>The genome of Clostridium kluyveri, a strict anaerobe with unique metabolic features.</title>
        <authorList>
            <person name="Seedorf H."/>
            <person name="Fricke W.F."/>
            <person name="Veith B."/>
            <person name="Brueggemann H."/>
            <person name="Liesegang H."/>
            <person name="Strittmatter A."/>
            <person name="Miethke M."/>
            <person name="Buckel W."/>
            <person name="Hinderberger J."/>
            <person name="Li F."/>
            <person name="Hagemeier C."/>
            <person name="Thauer R.K."/>
            <person name="Gottschalk G."/>
        </authorList>
    </citation>
    <scope>NUCLEOTIDE SEQUENCE [LARGE SCALE GENOMIC DNA]</scope>
    <source>
        <strain>ATCC 8527 / DSM 555 / NBRC 12016 / NCIMB 10680 / K1</strain>
    </source>
</reference>
<sequence length="125" mass="13638">MPTISQLIRKGRKTVASKSTAPALKECPQKRGVCTVVKTTTPKKPNSALRKIARVRLTNGYEVSAYIPGIGHNLQEHSVVLIRGGRVKDLPGVRYHIVRGALDSAGVADRLQGRSKYGAKRPKQK</sequence>
<accession>A5N4P2</accession>
<proteinExistence type="inferred from homology"/>
<comment type="function">
    <text evidence="2">With S4 and S5 plays an important role in translational accuracy.</text>
</comment>
<comment type="function">
    <text evidence="2">Interacts with and stabilizes bases of the 16S rRNA that are involved in tRNA selection in the A site and with the mRNA backbone. Located at the interface of the 30S and 50S subunits, it traverses the body of the 30S subunit contacting proteins on the other side and probably holding the rRNA structure together. The combined cluster of proteins S8, S12 and S17 appears to hold together the shoulder and platform of the 30S subunit.</text>
</comment>
<comment type="subunit">
    <text evidence="2">Part of the 30S ribosomal subunit. Contacts proteins S8 and S17. May interact with IF1 in the 30S initiation complex.</text>
</comment>
<comment type="similarity">
    <text evidence="2">Belongs to the universal ribosomal protein uS12 family.</text>
</comment>
<gene>
    <name evidence="2" type="primary">rpsL</name>
    <name type="ordered locus">CKL_0219</name>
</gene>
<evidence type="ECO:0000250" key="1"/>
<evidence type="ECO:0000255" key="2">
    <source>
        <dbReference type="HAMAP-Rule" id="MF_00403"/>
    </source>
</evidence>
<evidence type="ECO:0000305" key="3"/>
<feature type="chain" id="PRO_1000080388" description="Small ribosomal subunit protein uS12">
    <location>
        <begin position="1"/>
        <end position="125"/>
    </location>
</feature>
<feature type="modified residue" description="3-methylthioaspartic acid" evidence="1">
    <location>
        <position position="89"/>
    </location>
</feature>
<keyword id="KW-0488">Methylation</keyword>
<keyword id="KW-1185">Reference proteome</keyword>
<keyword id="KW-0687">Ribonucleoprotein</keyword>
<keyword id="KW-0689">Ribosomal protein</keyword>
<keyword id="KW-0694">RNA-binding</keyword>
<keyword id="KW-0699">rRNA-binding</keyword>
<keyword id="KW-0820">tRNA-binding</keyword>